<dbReference type="EMBL" id="AF440571">
    <property type="protein sequence ID" value="AAL27722.1"/>
    <property type="molecule type" value="Genomic_DNA"/>
</dbReference>
<dbReference type="RefSeq" id="NP_445676.1">
    <property type="nucleotide sequence ID" value="NC_003214.2"/>
</dbReference>
<dbReference type="GeneID" id="922338"/>
<dbReference type="KEGG" id="vg:922338"/>
<dbReference type="Proteomes" id="UP000007017">
    <property type="component" value="Segment"/>
</dbReference>
<organismHost>
    <name type="scientific">Saccharolobus islandicus</name>
    <name type="common">Sulfolobus islandicus</name>
    <dbReference type="NCBI Taxonomy" id="43080"/>
</organismHost>
<evidence type="ECO:0000256" key="1">
    <source>
        <dbReference type="SAM" id="MobiDB-lite"/>
    </source>
</evidence>
<name>Y011_SIFVH</name>
<protein>
    <recommendedName>
        <fullName>Uncharacterized protein 11</fullName>
    </recommendedName>
</protein>
<organism>
    <name type="scientific">Sulfolobus islandicus filamentous virus (isolate Iceland/Hveragerdi)</name>
    <name type="common">SIFV</name>
    <dbReference type="NCBI Taxonomy" id="654908"/>
    <lineage>
        <taxon>Viruses</taxon>
        <taxon>Adnaviria</taxon>
        <taxon>Zilligvirae</taxon>
        <taxon>Taleaviricota</taxon>
        <taxon>Tokiviricetes</taxon>
        <taxon>Ligamenvirales</taxon>
        <taxon>Lipothrixviridae</taxon>
        <taxon>Betalipothrixvirus</taxon>
        <taxon>Sulfolobus islandicus filamentous virus</taxon>
    </lineage>
</organism>
<feature type="chain" id="PRO_0000385390" description="Uncharacterized protein 11">
    <location>
        <begin position="1"/>
        <end position="188"/>
    </location>
</feature>
<feature type="region of interest" description="Disordered" evidence="1">
    <location>
        <begin position="1"/>
        <end position="21"/>
    </location>
</feature>
<feature type="compositionally biased region" description="Basic and acidic residues" evidence="1">
    <location>
        <begin position="1"/>
        <end position="15"/>
    </location>
</feature>
<proteinExistence type="predicted"/>
<reference key="1">
    <citation type="journal article" date="2000" name="Virology">
        <title>A novel lipothrixvirus, SIFV, of the extremely thermophilic crenarchaeon Sulfolobus.</title>
        <authorList>
            <person name="Arnold H.P."/>
            <person name="Zillig W."/>
            <person name="Ziese U."/>
            <person name="Holz I."/>
            <person name="Crosby M."/>
            <person name="Utterback T."/>
            <person name="Weidmann J.F."/>
            <person name="Umayam L.A."/>
            <person name="Teffera K."/>
            <person name="Kristjanson J.K."/>
            <person name="Klenk H.P."/>
            <person name="Nelson K.E."/>
            <person name="Fraser C.M."/>
        </authorList>
    </citation>
    <scope>NUCLEOTIDE SEQUENCE [GENOMIC DNA]</scope>
</reference>
<keyword id="KW-1185">Reference proteome</keyword>
<sequence>MVSSKDKIKEELKQEEPEENVEIANTETQKIEMVEEAKSDEFVLPFQRENLKNYLWRLLIIKKVEIRDVILKNSNEPAQVSYIDGYVIDNNELEQRLIKEIVNNQTIPINLLKEVNNHKKEVYLFSTSQGVYYSLLRSVVPKLKNGAVIVGIALQQSDYPQPMVTLVHPSRLEELKTQYEALSKTKKG</sequence>
<gene>
    <name type="primary">SIFV0011</name>
</gene>
<accession>Q914L9</accession>